<dbReference type="EC" id="2.7.1.167" evidence="1"/>
<dbReference type="EC" id="2.7.7.70" evidence="1"/>
<dbReference type="EMBL" id="AE017143">
    <property type="protein sequence ID" value="AAP96033.1"/>
    <property type="status" value="ALT_INIT"/>
    <property type="molecule type" value="Genomic_DNA"/>
</dbReference>
<dbReference type="RefSeq" id="WP_010945082.1">
    <property type="nucleotide sequence ID" value="NC_002940.2"/>
</dbReference>
<dbReference type="SMR" id="Q7VM30"/>
<dbReference type="STRING" id="233412.HD_1182"/>
<dbReference type="KEGG" id="hdu:HD_1182"/>
<dbReference type="eggNOG" id="COG0615">
    <property type="taxonomic scope" value="Bacteria"/>
</dbReference>
<dbReference type="eggNOG" id="COG2870">
    <property type="taxonomic scope" value="Bacteria"/>
</dbReference>
<dbReference type="HOGENOM" id="CLU_021150_2_1_6"/>
<dbReference type="OrthoDB" id="9802794at2"/>
<dbReference type="UniPathway" id="UPA00356">
    <property type="reaction ID" value="UER00437"/>
</dbReference>
<dbReference type="UniPathway" id="UPA00356">
    <property type="reaction ID" value="UER00439"/>
</dbReference>
<dbReference type="UniPathway" id="UPA00976"/>
<dbReference type="Proteomes" id="UP000001022">
    <property type="component" value="Chromosome"/>
</dbReference>
<dbReference type="GO" id="GO:0005829">
    <property type="term" value="C:cytosol"/>
    <property type="evidence" value="ECO:0007669"/>
    <property type="project" value="TreeGrafter"/>
</dbReference>
<dbReference type="GO" id="GO:0005524">
    <property type="term" value="F:ATP binding"/>
    <property type="evidence" value="ECO:0007669"/>
    <property type="project" value="UniProtKB-UniRule"/>
</dbReference>
<dbReference type="GO" id="GO:0033785">
    <property type="term" value="F:heptose 7-phosphate kinase activity"/>
    <property type="evidence" value="ECO:0007669"/>
    <property type="project" value="UniProtKB-UniRule"/>
</dbReference>
<dbReference type="GO" id="GO:0033786">
    <property type="term" value="F:heptose-1-phosphate adenylyltransferase activity"/>
    <property type="evidence" value="ECO:0007669"/>
    <property type="project" value="UniProtKB-UniRule"/>
</dbReference>
<dbReference type="GO" id="GO:0016773">
    <property type="term" value="F:phosphotransferase activity, alcohol group as acceptor"/>
    <property type="evidence" value="ECO:0007669"/>
    <property type="project" value="InterPro"/>
</dbReference>
<dbReference type="GO" id="GO:0097171">
    <property type="term" value="P:ADP-L-glycero-beta-D-manno-heptose biosynthetic process"/>
    <property type="evidence" value="ECO:0007669"/>
    <property type="project" value="UniProtKB-UniPathway"/>
</dbReference>
<dbReference type="CDD" id="cd01172">
    <property type="entry name" value="RfaE_like"/>
    <property type="match status" value="1"/>
</dbReference>
<dbReference type="FunFam" id="3.40.1190.20:FF:000002">
    <property type="entry name" value="Bifunctional protein HldE"/>
    <property type="match status" value="1"/>
</dbReference>
<dbReference type="FunFam" id="3.40.50.620:FF:000028">
    <property type="entry name" value="Bifunctional protein HldE"/>
    <property type="match status" value="1"/>
</dbReference>
<dbReference type="Gene3D" id="3.40.1190.20">
    <property type="match status" value="1"/>
</dbReference>
<dbReference type="Gene3D" id="3.40.50.620">
    <property type="entry name" value="HUPs"/>
    <property type="match status" value="1"/>
</dbReference>
<dbReference type="HAMAP" id="MF_01603">
    <property type="entry name" value="HldE"/>
    <property type="match status" value="1"/>
</dbReference>
<dbReference type="InterPro" id="IPR023030">
    <property type="entry name" value="Bifunc_HldE"/>
</dbReference>
<dbReference type="InterPro" id="IPR004821">
    <property type="entry name" value="Cyt_trans-like"/>
</dbReference>
<dbReference type="InterPro" id="IPR011611">
    <property type="entry name" value="PfkB_dom"/>
</dbReference>
<dbReference type="InterPro" id="IPR011913">
    <property type="entry name" value="RfaE_dom_I"/>
</dbReference>
<dbReference type="InterPro" id="IPR011914">
    <property type="entry name" value="RfaE_dom_II"/>
</dbReference>
<dbReference type="InterPro" id="IPR029056">
    <property type="entry name" value="Ribokinase-like"/>
</dbReference>
<dbReference type="InterPro" id="IPR014729">
    <property type="entry name" value="Rossmann-like_a/b/a_fold"/>
</dbReference>
<dbReference type="NCBIfam" id="TIGR00125">
    <property type="entry name" value="cyt_tran_rel"/>
    <property type="match status" value="1"/>
</dbReference>
<dbReference type="NCBIfam" id="NF008454">
    <property type="entry name" value="PRK11316.1"/>
    <property type="match status" value="1"/>
</dbReference>
<dbReference type="NCBIfam" id="TIGR02198">
    <property type="entry name" value="rfaE_dom_I"/>
    <property type="match status" value="1"/>
</dbReference>
<dbReference type="NCBIfam" id="TIGR02199">
    <property type="entry name" value="rfaE_dom_II"/>
    <property type="match status" value="1"/>
</dbReference>
<dbReference type="PANTHER" id="PTHR46969">
    <property type="entry name" value="BIFUNCTIONAL PROTEIN HLDE"/>
    <property type="match status" value="1"/>
</dbReference>
<dbReference type="PANTHER" id="PTHR46969:SF1">
    <property type="entry name" value="BIFUNCTIONAL PROTEIN HLDE"/>
    <property type="match status" value="1"/>
</dbReference>
<dbReference type="Pfam" id="PF01467">
    <property type="entry name" value="CTP_transf_like"/>
    <property type="match status" value="1"/>
</dbReference>
<dbReference type="Pfam" id="PF00294">
    <property type="entry name" value="PfkB"/>
    <property type="match status" value="1"/>
</dbReference>
<dbReference type="SUPFAM" id="SSF52374">
    <property type="entry name" value="Nucleotidylyl transferase"/>
    <property type="match status" value="1"/>
</dbReference>
<dbReference type="SUPFAM" id="SSF53613">
    <property type="entry name" value="Ribokinase-like"/>
    <property type="match status" value="1"/>
</dbReference>
<reference key="1">
    <citation type="submission" date="2003-06" db="EMBL/GenBank/DDBJ databases">
        <title>The complete genome sequence of Haemophilus ducreyi.</title>
        <authorList>
            <person name="Munson R.S. Jr."/>
            <person name="Ray W.C."/>
            <person name="Mahairas G."/>
            <person name="Sabo P."/>
            <person name="Mungur R."/>
            <person name="Johnson L."/>
            <person name="Nguyen D."/>
            <person name="Wang J."/>
            <person name="Forst C."/>
            <person name="Hood L."/>
        </authorList>
    </citation>
    <scope>NUCLEOTIDE SEQUENCE [LARGE SCALE GENOMIC DNA]</scope>
    <source>
        <strain>35000HP / ATCC 700724</strain>
    </source>
</reference>
<proteinExistence type="inferred from homology"/>
<gene>
    <name evidence="1" type="primary">hldE</name>
    <name type="synonym">waaE</name>
    <name type="ordered locus">HD_1182</name>
</gene>
<keyword id="KW-0067">ATP-binding</keyword>
<keyword id="KW-0119">Carbohydrate metabolism</keyword>
<keyword id="KW-0418">Kinase</keyword>
<keyword id="KW-0511">Multifunctional enzyme</keyword>
<keyword id="KW-0547">Nucleotide-binding</keyword>
<keyword id="KW-0548">Nucleotidyltransferase</keyword>
<keyword id="KW-1185">Reference proteome</keyword>
<keyword id="KW-0808">Transferase</keyword>
<organism>
    <name type="scientific">Haemophilus ducreyi (strain 35000HP / ATCC 700724)</name>
    <dbReference type="NCBI Taxonomy" id="233412"/>
    <lineage>
        <taxon>Bacteria</taxon>
        <taxon>Pseudomonadati</taxon>
        <taxon>Pseudomonadota</taxon>
        <taxon>Gammaproteobacteria</taxon>
        <taxon>Pasteurellales</taxon>
        <taxon>Pasteurellaceae</taxon>
        <taxon>Haemophilus</taxon>
    </lineage>
</organism>
<comment type="function">
    <text evidence="1">Catalyzes the phosphorylation of D-glycero-D-manno-heptose 7-phosphate at the C-1 position to selectively form D-glycero-beta-D-manno-heptose-1,7-bisphosphate.</text>
</comment>
<comment type="function">
    <text evidence="1">Catalyzes the ADP transfer from ATP to D-glycero-beta-D-manno-heptose 1-phosphate, yielding ADP-D-glycero-beta-D-manno-heptose.</text>
</comment>
<comment type="catalytic activity">
    <reaction evidence="1">
        <text>D-glycero-beta-D-manno-heptose 7-phosphate + ATP = D-glycero-beta-D-manno-heptose 1,7-bisphosphate + ADP + H(+)</text>
        <dbReference type="Rhea" id="RHEA:27473"/>
        <dbReference type="ChEBI" id="CHEBI:15378"/>
        <dbReference type="ChEBI" id="CHEBI:30616"/>
        <dbReference type="ChEBI" id="CHEBI:60204"/>
        <dbReference type="ChEBI" id="CHEBI:60208"/>
        <dbReference type="ChEBI" id="CHEBI:456216"/>
        <dbReference type="EC" id="2.7.1.167"/>
    </reaction>
</comment>
<comment type="catalytic activity">
    <reaction evidence="1">
        <text>D-glycero-beta-D-manno-heptose 1-phosphate + ATP + H(+) = ADP-D-glycero-beta-D-manno-heptose + diphosphate</text>
        <dbReference type="Rhea" id="RHEA:27465"/>
        <dbReference type="ChEBI" id="CHEBI:15378"/>
        <dbReference type="ChEBI" id="CHEBI:30616"/>
        <dbReference type="ChEBI" id="CHEBI:33019"/>
        <dbReference type="ChEBI" id="CHEBI:59967"/>
        <dbReference type="ChEBI" id="CHEBI:61593"/>
        <dbReference type="EC" id="2.7.7.70"/>
    </reaction>
</comment>
<comment type="pathway">
    <text evidence="1">Nucleotide-sugar biosynthesis; ADP-L-glycero-beta-D-manno-heptose biosynthesis; ADP-L-glycero-beta-D-manno-heptose from D-glycero-beta-D-manno-heptose 7-phosphate: step 1/4.</text>
</comment>
<comment type="pathway">
    <text evidence="1">Nucleotide-sugar biosynthesis; ADP-L-glycero-beta-D-manno-heptose biosynthesis; ADP-L-glycero-beta-D-manno-heptose from D-glycero-beta-D-manno-heptose 7-phosphate: step 3/4.</text>
</comment>
<comment type="pathway">
    <text>Bacterial outer membrane biogenesis; LOS core biosynthesis.</text>
</comment>
<comment type="subunit">
    <text evidence="1">Homodimer.</text>
</comment>
<comment type="similarity">
    <text evidence="1">In the N-terminal section; belongs to the carbohydrate kinase PfkB family.</text>
</comment>
<comment type="similarity">
    <text evidence="1">In the C-terminal section; belongs to the cytidylyltransferase family.</text>
</comment>
<comment type="sequence caution" evidence="2">
    <conflict type="erroneous initiation">
        <sequence resource="EMBL-CDS" id="AAP96033"/>
    </conflict>
</comment>
<evidence type="ECO:0000255" key="1">
    <source>
        <dbReference type="HAMAP-Rule" id="MF_01603"/>
    </source>
</evidence>
<evidence type="ECO:0000305" key="2"/>
<accession>Q7VM30</accession>
<name>HLDE_HAEDU</name>
<protein>
    <recommendedName>
        <fullName evidence="1">Bifunctional protein HldE</fullName>
    </recommendedName>
    <domain>
        <recommendedName>
            <fullName evidence="1">D-beta-D-heptose 7-phosphate kinase</fullName>
            <ecNumber evidence="1">2.7.1.167</ecNumber>
        </recommendedName>
        <alternativeName>
            <fullName evidence="1">D-beta-D-heptose 7-phosphotransferase</fullName>
        </alternativeName>
        <alternativeName>
            <fullName evidence="1">D-glycero-beta-D-manno-heptose-7-phosphate kinase</fullName>
        </alternativeName>
    </domain>
    <domain>
        <recommendedName>
            <fullName evidence="1">D-beta-D-heptose 1-phosphate adenylyltransferase</fullName>
            <ecNumber evidence="1">2.7.7.70</ecNumber>
        </recommendedName>
        <alternativeName>
            <fullName evidence="1">D-glycero-beta-D-manno-heptose 1-phosphate adenylyltransferase</fullName>
        </alternativeName>
    </domain>
</protein>
<sequence length="475" mass="51902">MMQYSLKFNQAKVLVLGDVMLDRYWFGATNRISPEAPVPVVKVKDMEERAGGAANVAMNIASLNATVALHGLVGHDDAGCVLDMLLKNHHIQNHCITLDSHPTITKLRILSRHQQLLRLDFEESFHNVESSPLLAKLQQQITGYGALILSDYGKGTLAAVQQMIQIARQAKVPVLIDPKGTDFERYRGATLLTPNMAEFEAVVGACLNDNDIVSKGLKLINDLELSALLVTRSEKGMTLLRPNHPPFHLPTQAKEVYDVTGAGDTVISILATAIADGRPYEEACYLANAAAGIVVGKLGTSTVNATELENAIHHREETGFGIVTEERLKQFTKEAKNRGEKIVMTNGCFDILHPGHVSYLENARKLGDRLIVAVNCDQSVKRLKGESRPINSLSARMAILAGLASVDWVIAFEEDTPQRLISEILPDVLVKGGDYKPEQIVGCQEVWANGGNVKALNFEDGCSTTDVIKKIQAIR</sequence>
<feature type="chain" id="PRO_0000080111" description="Bifunctional protein HldE">
    <location>
        <begin position="1"/>
        <end position="475"/>
    </location>
</feature>
<feature type="region of interest" description="Ribokinase">
    <location>
        <begin position="1"/>
        <end position="318"/>
    </location>
</feature>
<feature type="region of interest" description="Cytidylyltransferase">
    <location>
        <begin position="344"/>
        <end position="475"/>
    </location>
</feature>
<feature type="active site" evidence="1">
    <location>
        <position position="264"/>
    </location>
</feature>
<feature type="binding site" evidence="1">
    <location>
        <begin position="195"/>
        <end position="198"/>
    </location>
    <ligand>
        <name>ATP</name>
        <dbReference type="ChEBI" id="CHEBI:30616"/>
    </ligand>
</feature>